<organism>
    <name type="scientific">Pasteurella multocida (strain Pm70)</name>
    <dbReference type="NCBI Taxonomy" id="272843"/>
    <lineage>
        <taxon>Bacteria</taxon>
        <taxon>Pseudomonadati</taxon>
        <taxon>Pseudomonadota</taxon>
        <taxon>Gammaproteobacteria</taxon>
        <taxon>Pasteurellales</taxon>
        <taxon>Pasteurellaceae</taxon>
        <taxon>Pasteurella</taxon>
    </lineage>
</organism>
<dbReference type="EMBL" id="AE004439">
    <property type="protein sequence ID" value="AAK03700.1"/>
    <property type="molecule type" value="Genomic_DNA"/>
</dbReference>
<dbReference type="RefSeq" id="WP_005735753.1">
    <property type="nucleotide sequence ID" value="NC_002663.1"/>
</dbReference>
<dbReference type="STRING" id="272843.PM1616"/>
<dbReference type="EnsemblBacteria" id="AAK03700">
    <property type="protein sequence ID" value="AAK03700"/>
    <property type="gene ID" value="PM1616"/>
</dbReference>
<dbReference type="KEGG" id="pmu:PM1616"/>
<dbReference type="PATRIC" id="fig|272843.6.peg.1636"/>
<dbReference type="HOGENOM" id="CLU_032288_0_0_6"/>
<dbReference type="OrthoDB" id="9808671at2"/>
<dbReference type="Proteomes" id="UP000000809">
    <property type="component" value="Chromosome"/>
</dbReference>
<dbReference type="GO" id="GO:0005886">
    <property type="term" value="C:plasma membrane"/>
    <property type="evidence" value="ECO:0007669"/>
    <property type="project" value="UniProtKB-SubCell"/>
</dbReference>
<dbReference type="HAMAP" id="MF_00672">
    <property type="entry name" value="UPF0761"/>
    <property type="match status" value="1"/>
</dbReference>
<dbReference type="InterPro" id="IPR023679">
    <property type="entry name" value="UPF0761_bac"/>
</dbReference>
<dbReference type="InterPro" id="IPR017039">
    <property type="entry name" value="Virul_fac_BrkB"/>
</dbReference>
<dbReference type="NCBIfam" id="NF002457">
    <property type="entry name" value="PRK01637.1"/>
    <property type="match status" value="1"/>
</dbReference>
<dbReference type="NCBIfam" id="TIGR00765">
    <property type="entry name" value="yihY_not_rbn"/>
    <property type="match status" value="1"/>
</dbReference>
<dbReference type="PANTHER" id="PTHR30213">
    <property type="entry name" value="INNER MEMBRANE PROTEIN YHJD"/>
    <property type="match status" value="1"/>
</dbReference>
<dbReference type="PANTHER" id="PTHR30213:SF0">
    <property type="entry name" value="UPF0761 MEMBRANE PROTEIN YIHY"/>
    <property type="match status" value="1"/>
</dbReference>
<dbReference type="Pfam" id="PF03631">
    <property type="entry name" value="Virul_fac_BrkB"/>
    <property type="match status" value="1"/>
</dbReference>
<dbReference type="PIRSF" id="PIRSF035875">
    <property type="entry name" value="RNase_BN"/>
    <property type="match status" value="1"/>
</dbReference>
<sequence>MNNVLKNAGLFLRLFWLRFQQNKLSQAAGYLTYSTMLALVPLVMVVFSVFSAFPVFNEVTDELKGFIFNNFAPQASDMVGQYIDEFVSNSKQMSAVGVISLVVVALMLINSIDRTLNSIWHDTTIRPLVFSFAIYWLILTLGPLLIGASIGVSSYIAAMLNENISLPFGLKILSFVPFFLTWLIFTLIYTVVPNKKVKIMHSAIGALVAAVFFTLGKQAFLWYVTTFPSYQLIYGAMATLPIMLLWIQLSWVVILIGAQLASVLADYTLCTQGKIRVEELVAADTHEPALQQKMEKTEQTLKTEITQQKQRLEKQG</sequence>
<accession>Q9CKJ9</accession>
<comment type="subcellular location">
    <subcellularLocation>
        <location evidence="1">Cell inner membrane</location>
        <topology evidence="1">Multi-pass membrane protein</topology>
    </subcellularLocation>
</comment>
<comment type="similarity">
    <text evidence="1">Belongs to the UPF0761 family.</text>
</comment>
<feature type="chain" id="PRO_0000200990" description="UPF0761 membrane protein PM1616">
    <location>
        <begin position="1"/>
        <end position="316"/>
    </location>
</feature>
<feature type="transmembrane region" description="Helical" evidence="1">
    <location>
        <begin position="36"/>
        <end position="56"/>
    </location>
</feature>
<feature type="transmembrane region" description="Helical" evidence="1">
    <location>
        <begin position="92"/>
        <end position="112"/>
    </location>
</feature>
<feature type="transmembrane region" description="Helical" evidence="1">
    <location>
        <begin position="128"/>
        <end position="148"/>
    </location>
</feature>
<feature type="transmembrane region" description="Helical" evidence="1">
    <location>
        <begin position="172"/>
        <end position="192"/>
    </location>
</feature>
<feature type="transmembrane region" description="Helical" evidence="1">
    <location>
        <begin position="204"/>
        <end position="224"/>
    </location>
</feature>
<feature type="transmembrane region" description="Helical" evidence="1">
    <location>
        <begin position="236"/>
        <end position="256"/>
    </location>
</feature>
<keyword id="KW-0997">Cell inner membrane</keyword>
<keyword id="KW-1003">Cell membrane</keyword>
<keyword id="KW-0472">Membrane</keyword>
<keyword id="KW-1185">Reference proteome</keyword>
<keyword id="KW-0812">Transmembrane</keyword>
<keyword id="KW-1133">Transmembrane helix</keyword>
<proteinExistence type="inferred from homology"/>
<evidence type="ECO:0000255" key="1">
    <source>
        <dbReference type="HAMAP-Rule" id="MF_00672"/>
    </source>
</evidence>
<name>Y1616_PASMU</name>
<gene>
    <name type="ordered locus">PM1616</name>
</gene>
<reference key="1">
    <citation type="journal article" date="2001" name="Proc. Natl. Acad. Sci. U.S.A.">
        <title>Complete genomic sequence of Pasteurella multocida Pm70.</title>
        <authorList>
            <person name="May B.J."/>
            <person name="Zhang Q."/>
            <person name="Li L.L."/>
            <person name="Paustian M.L."/>
            <person name="Whittam T.S."/>
            <person name="Kapur V."/>
        </authorList>
    </citation>
    <scope>NUCLEOTIDE SEQUENCE [LARGE SCALE GENOMIC DNA]</scope>
    <source>
        <strain>Pm70</strain>
    </source>
</reference>
<protein>
    <recommendedName>
        <fullName evidence="1">UPF0761 membrane protein PM1616</fullName>
    </recommendedName>
</protein>